<organism>
    <name type="scientific">Conus quercinus</name>
    <name type="common">Oak cone</name>
    <dbReference type="NCBI Taxonomy" id="101313"/>
    <lineage>
        <taxon>Eukaryota</taxon>
        <taxon>Metazoa</taxon>
        <taxon>Spiralia</taxon>
        <taxon>Lophotrochozoa</taxon>
        <taxon>Mollusca</taxon>
        <taxon>Gastropoda</taxon>
        <taxon>Caenogastropoda</taxon>
        <taxon>Neogastropoda</taxon>
        <taxon>Conoidea</taxon>
        <taxon>Conidae</taxon>
        <taxon>Conus</taxon>
        <taxon>Lividoconus</taxon>
    </lineage>
</organism>
<comment type="subcellular location">
    <subcellularLocation>
        <location evidence="1">Secreted</location>
    </subcellularLocation>
</comment>
<comment type="tissue specificity">
    <text>Expressed by the venom duct.</text>
</comment>
<comment type="domain">
    <text>The cysteine framework is V (CC-CC).</text>
</comment>
<comment type="PTM">
    <text evidence="3">Contains 2 disulfide bonds that can be either 'C1-C3, C2-C4' or 'C1-C4, C2-C3', since these disulfide connectivities have been observed for conotoxins with cysteine framework V (for examples, see AC P0DQQ7 and AC P81755).</text>
</comment>
<comment type="similarity">
    <text evidence="3">Belongs to the conotoxin T superfamily.</text>
</comment>
<reference key="1">
    <citation type="patent" date="2002-11-05" number="JP2002536970">
        <title>Tau-conotoxin peptides.</title>
        <authorList>
            <person name="Walker C."/>
            <person name="Shetty R."/>
            <person name="Olivera B.M."/>
            <person name="Hooper D."/>
            <person name="Jacobsen R."/>
            <person name="Steele D."/>
            <person name="Jones R.M."/>
        </authorList>
    </citation>
    <scope>NUCLEOTIDE SEQUENCE</scope>
</reference>
<keyword id="KW-0027">Amidation</keyword>
<keyword id="KW-0165">Cleavage on pair of basic residues</keyword>
<keyword id="KW-1015">Disulfide bond</keyword>
<keyword id="KW-0528">Neurotoxin</keyword>
<keyword id="KW-0964">Secreted</keyword>
<keyword id="KW-0732">Signal</keyword>
<keyword id="KW-0800">Toxin</keyword>
<protein>
    <recommendedName>
        <fullName evidence="3">Conotoxin Qc5.2</fullName>
    </recommendedName>
</protein>
<accession>P0DJC5</accession>
<sequence>MRCVPVFIILLLLSPSAPSVDAHPMTKDDVPQASLHDDAKRTLQVPWMKRGCCAMLTCCVGR</sequence>
<name>CT52_CONQU</name>
<proteinExistence type="evidence at transcript level"/>
<dbReference type="EMBL" id="BD270193">
    <property type="status" value="NOT_ANNOTATED_CDS"/>
    <property type="molecule type" value="Unassigned_DNA"/>
</dbReference>
<dbReference type="GO" id="GO:0005576">
    <property type="term" value="C:extracellular region"/>
    <property type="evidence" value="ECO:0007669"/>
    <property type="project" value="UniProtKB-SubCell"/>
</dbReference>
<dbReference type="GO" id="GO:0090729">
    <property type="term" value="F:toxin activity"/>
    <property type="evidence" value="ECO:0007669"/>
    <property type="project" value="UniProtKB-KW"/>
</dbReference>
<dbReference type="InterPro" id="IPR031565">
    <property type="entry name" value="T-conotoxin"/>
</dbReference>
<dbReference type="Pfam" id="PF16981">
    <property type="entry name" value="Chi-conotoxin"/>
    <property type="match status" value="1"/>
</dbReference>
<evidence type="ECO:0000250" key="1"/>
<evidence type="ECO:0000255" key="2"/>
<evidence type="ECO:0000305" key="3"/>
<feature type="signal peptide" evidence="2">
    <location>
        <begin position="1"/>
        <end position="22"/>
    </location>
</feature>
<feature type="propeptide" id="PRO_0000415311" evidence="1">
    <location>
        <begin position="23"/>
        <end position="48"/>
    </location>
</feature>
<feature type="peptide" id="PRO_0000415312" description="Conotoxin Qc5.2">
    <location>
        <begin position="51"/>
        <end position="60"/>
    </location>
</feature>
<feature type="modified residue" description="Valine amide" evidence="1">
    <location>
        <position position="60"/>
    </location>
</feature>